<keyword id="KW-1003">Cell membrane</keyword>
<keyword id="KW-0472">Membrane</keyword>
<keyword id="KW-1185">Reference proteome</keyword>
<keyword id="KW-0812">Transmembrane</keyword>
<keyword id="KW-1133">Transmembrane helix</keyword>
<protein>
    <recommendedName>
        <fullName>Uncharacterized protein AF_1268</fullName>
    </recommendedName>
</protein>
<feature type="chain" id="PRO_0000127980" description="Uncharacterized protein AF_1268">
    <location>
        <begin position="1"/>
        <end position="189"/>
    </location>
</feature>
<feature type="transmembrane region" description="Helical" evidence="1">
    <location>
        <begin position="4"/>
        <end position="21"/>
    </location>
</feature>
<feature type="transmembrane region" description="Helical" evidence="1">
    <location>
        <begin position="34"/>
        <end position="56"/>
    </location>
</feature>
<feature type="transmembrane region" description="Helical" evidence="1">
    <location>
        <begin position="79"/>
        <end position="101"/>
    </location>
</feature>
<feature type="transmembrane region" description="Helical" evidence="1">
    <location>
        <begin position="122"/>
        <end position="144"/>
    </location>
</feature>
<feature type="transmembrane region" description="Helical" evidence="1">
    <location>
        <begin position="148"/>
        <end position="170"/>
    </location>
</feature>
<accession>O29000</accession>
<comment type="subcellular location">
    <subcellularLocation>
        <location evidence="2">Cell membrane</location>
        <topology evidence="2">Multi-pass membrane protein</topology>
    </subcellularLocation>
</comment>
<proteinExistence type="predicted"/>
<dbReference type="EMBL" id="AE000782">
    <property type="protein sequence ID" value="AAB89989.1"/>
    <property type="molecule type" value="Genomic_DNA"/>
</dbReference>
<dbReference type="PIR" id="C69408">
    <property type="entry name" value="C69408"/>
</dbReference>
<dbReference type="PaxDb" id="224325-AF_1268"/>
<dbReference type="EnsemblBacteria" id="AAB89989">
    <property type="protein sequence ID" value="AAB89989"/>
    <property type="gene ID" value="AF_1268"/>
</dbReference>
<dbReference type="KEGG" id="afu:AF_1268"/>
<dbReference type="HOGENOM" id="CLU_1431571_0_0_2"/>
<dbReference type="Proteomes" id="UP000002199">
    <property type="component" value="Chromosome"/>
</dbReference>
<dbReference type="GO" id="GO:0005886">
    <property type="term" value="C:plasma membrane"/>
    <property type="evidence" value="ECO:0007669"/>
    <property type="project" value="UniProtKB-SubCell"/>
</dbReference>
<evidence type="ECO:0000255" key="1"/>
<evidence type="ECO:0000305" key="2"/>
<reference key="1">
    <citation type="journal article" date="1997" name="Nature">
        <title>The complete genome sequence of the hyperthermophilic, sulphate-reducing archaeon Archaeoglobus fulgidus.</title>
        <authorList>
            <person name="Klenk H.-P."/>
            <person name="Clayton R.A."/>
            <person name="Tomb J.-F."/>
            <person name="White O."/>
            <person name="Nelson K.E."/>
            <person name="Ketchum K.A."/>
            <person name="Dodson R.J."/>
            <person name="Gwinn M.L."/>
            <person name="Hickey E.K."/>
            <person name="Peterson J.D."/>
            <person name="Richardson D.L."/>
            <person name="Kerlavage A.R."/>
            <person name="Graham D.E."/>
            <person name="Kyrpides N.C."/>
            <person name="Fleischmann R.D."/>
            <person name="Quackenbush J."/>
            <person name="Lee N.H."/>
            <person name="Sutton G.G."/>
            <person name="Gill S.R."/>
            <person name="Kirkness E.F."/>
            <person name="Dougherty B.A."/>
            <person name="McKenney K."/>
            <person name="Adams M.D."/>
            <person name="Loftus B.J."/>
            <person name="Peterson S.N."/>
            <person name="Reich C.I."/>
            <person name="McNeil L.K."/>
            <person name="Badger J.H."/>
            <person name="Glodek A."/>
            <person name="Zhou L."/>
            <person name="Overbeek R."/>
            <person name="Gocayne J.D."/>
            <person name="Weidman J.F."/>
            <person name="McDonald L.A."/>
            <person name="Utterback T.R."/>
            <person name="Cotton M.D."/>
            <person name="Spriggs T."/>
            <person name="Artiach P."/>
            <person name="Kaine B.P."/>
            <person name="Sykes S.M."/>
            <person name="Sadow P.W."/>
            <person name="D'Andrea K.P."/>
            <person name="Bowman C."/>
            <person name="Fujii C."/>
            <person name="Garland S.A."/>
            <person name="Mason T.M."/>
            <person name="Olsen G.J."/>
            <person name="Fraser C.M."/>
            <person name="Smith H.O."/>
            <person name="Woese C.R."/>
            <person name="Venter J.C."/>
        </authorList>
    </citation>
    <scope>NUCLEOTIDE SEQUENCE [LARGE SCALE GENOMIC DNA]</scope>
    <source>
        <strain>ATCC 49558 / DSM 4304 / JCM 9628 / NBRC 100126 / VC-16</strain>
    </source>
</reference>
<sequence length="189" mass="21236">MVSAISTVLYVLIPFLVFLFRRIDARAIMVSGIAFYPFHLFLPMIVVFITGIPLILKSKGVYITLDGIGMENPDFSDALLVIDTMLFQIMLLQPFITLIYSRGVDLKIQDVRLILGTPLRRRILSSLFAFVIAGIALPEIVLLNFSGILHVDYLFFVHLIASSVFANLLVPSDSSKTSLVVFYLWVYIS</sequence>
<gene>
    <name type="ordered locus">AF_1268</name>
</gene>
<name>Y1268_ARCFU</name>
<organism>
    <name type="scientific">Archaeoglobus fulgidus (strain ATCC 49558 / DSM 4304 / JCM 9628 / NBRC 100126 / VC-16)</name>
    <dbReference type="NCBI Taxonomy" id="224325"/>
    <lineage>
        <taxon>Archaea</taxon>
        <taxon>Methanobacteriati</taxon>
        <taxon>Methanobacteriota</taxon>
        <taxon>Archaeoglobi</taxon>
        <taxon>Archaeoglobales</taxon>
        <taxon>Archaeoglobaceae</taxon>
        <taxon>Archaeoglobus</taxon>
    </lineage>
</organism>